<protein>
    <recommendedName>
        <fullName evidence="1">Large ribosomal subunit protein uL16</fullName>
    </recommendedName>
    <alternativeName>
        <fullName evidence="3">50S ribosomal protein L16</fullName>
    </alternativeName>
</protein>
<sequence>MLMPKRVKYRKQQRGHNRGMAHRGNTVAFGEYGLMAIEATWMTSRQIEAARRAISHHVKRGGKIWIRIFPDKPVTAKPAETRMGSGKGAVDHYVAVIKPGRILFELAGVRPEIAHEALERAAQKLPIKCKIVAREDLEGAA</sequence>
<organism>
    <name type="scientific">Roseiflexus castenholzii (strain DSM 13941 / HLO8)</name>
    <dbReference type="NCBI Taxonomy" id="383372"/>
    <lineage>
        <taxon>Bacteria</taxon>
        <taxon>Bacillati</taxon>
        <taxon>Chloroflexota</taxon>
        <taxon>Chloroflexia</taxon>
        <taxon>Chloroflexales</taxon>
        <taxon>Roseiflexineae</taxon>
        <taxon>Roseiflexaceae</taxon>
        <taxon>Roseiflexus</taxon>
    </lineage>
</organism>
<keyword id="KW-1185">Reference proteome</keyword>
<keyword id="KW-0687">Ribonucleoprotein</keyword>
<keyword id="KW-0689">Ribosomal protein</keyword>
<keyword id="KW-0694">RNA-binding</keyword>
<keyword id="KW-0699">rRNA-binding</keyword>
<keyword id="KW-0820">tRNA-binding</keyword>
<accession>A7NR56</accession>
<name>RL16_ROSCS</name>
<dbReference type="EMBL" id="CP000804">
    <property type="protein sequence ID" value="ABU60052.1"/>
    <property type="molecule type" value="Genomic_DNA"/>
</dbReference>
<dbReference type="RefSeq" id="WP_012122474.1">
    <property type="nucleotide sequence ID" value="NC_009767.1"/>
</dbReference>
<dbReference type="SMR" id="A7NR56"/>
<dbReference type="STRING" id="383372.Rcas_4019"/>
<dbReference type="KEGG" id="rca:Rcas_4019"/>
<dbReference type="eggNOG" id="COG0197">
    <property type="taxonomic scope" value="Bacteria"/>
</dbReference>
<dbReference type="HOGENOM" id="CLU_078858_2_1_0"/>
<dbReference type="OrthoDB" id="9802589at2"/>
<dbReference type="Proteomes" id="UP000000263">
    <property type="component" value="Chromosome"/>
</dbReference>
<dbReference type="GO" id="GO:0022625">
    <property type="term" value="C:cytosolic large ribosomal subunit"/>
    <property type="evidence" value="ECO:0007669"/>
    <property type="project" value="TreeGrafter"/>
</dbReference>
<dbReference type="GO" id="GO:0019843">
    <property type="term" value="F:rRNA binding"/>
    <property type="evidence" value="ECO:0007669"/>
    <property type="project" value="UniProtKB-UniRule"/>
</dbReference>
<dbReference type="GO" id="GO:0003735">
    <property type="term" value="F:structural constituent of ribosome"/>
    <property type="evidence" value="ECO:0007669"/>
    <property type="project" value="InterPro"/>
</dbReference>
<dbReference type="GO" id="GO:0000049">
    <property type="term" value="F:tRNA binding"/>
    <property type="evidence" value="ECO:0007669"/>
    <property type="project" value="UniProtKB-KW"/>
</dbReference>
<dbReference type="GO" id="GO:0006412">
    <property type="term" value="P:translation"/>
    <property type="evidence" value="ECO:0007669"/>
    <property type="project" value="UniProtKB-UniRule"/>
</dbReference>
<dbReference type="CDD" id="cd01433">
    <property type="entry name" value="Ribosomal_L16_L10e"/>
    <property type="match status" value="1"/>
</dbReference>
<dbReference type="FunFam" id="3.90.1170.10:FF:000001">
    <property type="entry name" value="50S ribosomal protein L16"/>
    <property type="match status" value="1"/>
</dbReference>
<dbReference type="Gene3D" id="3.90.1170.10">
    <property type="entry name" value="Ribosomal protein L10e/L16"/>
    <property type="match status" value="1"/>
</dbReference>
<dbReference type="HAMAP" id="MF_01342">
    <property type="entry name" value="Ribosomal_uL16"/>
    <property type="match status" value="1"/>
</dbReference>
<dbReference type="InterPro" id="IPR047873">
    <property type="entry name" value="Ribosomal_uL16"/>
</dbReference>
<dbReference type="InterPro" id="IPR000114">
    <property type="entry name" value="Ribosomal_uL16_bact-type"/>
</dbReference>
<dbReference type="InterPro" id="IPR020798">
    <property type="entry name" value="Ribosomal_uL16_CS"/>
</dbReference>
<dbReference type="InterPro" id="IPR016180">
    <property type="entry name" value="Ribosomal_uL16_dom"/>
</dbReference>
<dbReference type="InterPro" id="IPR036920">
    <property type="entry name" value="Ribosomal_uL16_sf"/>
</dbReference>
<dbReference type="NCBIfam" id="TIGR01164">
    <property type="entry name" value="rplP_bact"/>
    <property type="match status" value="1"/>
</dbReference>
<dbReference type="PANTHER" id="PTHR12220">
    <property type="entry name" value="50S/60S RIBOSOMAL PROTEIN L16"/>
    <property type="match status" value="1"/>
</dbReference>
<dbReference type="PANTHER" id="PTHR12220:SF13">
    <property type="entry name" value="LARGE RIBOSOMAL SUBUNIT PROTEIN UL16M"/>
    <property type="match status" value="1"/>
</dbReference>
<dbReference type="Pfam" id="PF00252">
    <property type="entry name" value="Ribosomal_L16"/>
    <property type="match status" value="1"/>
</dbReference>
<dbReference type="PRINTS" id="PR00060">
    <property type="entry name" value="RIBOSOMALL16"/>
</dbReference>
<dbReference type="SUPFAM" id="SSF54686">
    <property type="entry name" value="Ribosomal protein L16p/L10e"/>
    <property type="match status" value="1"/>
</dbReference>
<dbReference type="PROSITE" id="PS00586">
    <property type="entry name" value="RIBOSOMAL_L16_1"/>
    <property type="match status" value="1"/>
</dbReference>
<evidence type="ECO:0000255" key="1">
    <source>
        <dbReference type="HAMAP-Rule" id="MF_01342"/>
    </source>
</evidence>
<evidence type="ECO:0000256" key="2">
    <source>
        <dbReference type="SAM" id="MobiDB-lite"/>
    </source>
</evidence>
<evidence type="ECO:0000305" key="3"/>
<proteinExistence type="inferred from homology"/>
<gene>
    <name evidence="1" type="primary">rplP</name>
    <name type="ordered locus">Rcas_4019</name>
</gene>
<comment type="function">
    <text evidence="1">Binds 23S rRNA and is also seen to make contacts with the A and possibly P site tRNAs.</text>
</comment>
<comment type="subunit">
    <text evidence="1">Part of the 50S ribosomal subunit.</text>
</comment>
<comment type="similarity">
    <text evidence="1">Belongs to the universal ribosomal protein uL16 family.</text>
</comment>
<feature type="chain" id="PRO_1000086773" description="Large ribosomal subunit protein uL16">
    <location>
        <begin position="1"/>
        <end position="141"/>
    </location>
</feature>
<feature type="region of interest" description="Disordered" evidence="2">
    <location>
        <begin position="1"/>
        <end position="21"/>
    </location>
</feature>
<reference key="1">
    <citation type="submission" date="2007-08" db="EMBL/GenBank/DDBJ databases">
        <title>Complete sequence of Roseiflexus castenholzii DSM 13941.</title>
        <authorList>
            <consortium name="US DOE Joint Genome Institute"/>
            <person name="Copeland A."/>
            <person name="Lucas S."/>
            <person name="Lapidus A."/>
            <person name="Barry K."/>
            <person name="Glavina del Rio T."/>
            <person name="Dalin E."/>
            <person name="Tice H."/>
            <person name="Pitluck S."/>
            <person name="Thompson L.S."/>
            <person name="Brettin T."/>
            <person name="Bruce D."/>
            <person name="Detter J.C."/>
            <person name="Han C."/>
            <person name="Tapia R."/>
            <person name="Schmutz J."/>
            <person name="Larimer F."/>
            <person name="Land M."/>
            <person name="Hauser L."/>
            <person name="Kyrpides N."/>
            <person name="Mikhailova N."/>
            <person name="Bryant D.A."/>
            <person name="Hanada S."/>
            <person name="Tsukatani Y."/>
            <person name="Richardson P."/>
        </authorList>
    </citation>
    <scope>NUCLEOTIDE SEQUENCE [LARGE SCALE GENOMIC DNA]</scope>
    <source>
        <strain>DSM 13941 / HLO8</strain>
    </source>
</reference>